<accession>Q9D883</accession>
<accession>Q564E4</accession>
<accession>Q99LX2</accession>
<accession>Q9CZ98</accession>
<sequence>MAEYLASIFGTEKDKVNCSFYFKIGACRHGDRCSRLHNKPTFSQTIALLNIYRNPQNSSQSADGLRCAVSDVEMQEHYDEFFEEVFTEMEEKYGEVEEMNVCDNLGDHLVGNVYVKFRREEDAEKAVIDLNNRWFNGQPIHAELSPVTDFREACCRQYEMGECTRGGFCNFMHLKPISRELRRELYGRRRKKHRSRSRSRERRSRSRDRGRGGGGGGGGGGGRERDRRRSRDRERSGRF</sequence>
<name>U2AF1_MOUSE</name>
<keyword id="KW-0007">Acetylation</keyword>
<keyword id="KW-0479">Metal-binding</keyword>
<keyword id="KW-0488">Methylation</keyword>
<keyword id="KW-0507">mRNA processing</keyword>
<keyword id="KW-0508">mRNA splicing</keyword>
<keyword id="KW-0539">Nucleus</keyword>
<keyword id="KW-0597">Phosphoprotein</keyword>
<keyword id="KW-1185">Reference proteome</keyword>
<keyword id="KW-0677">Repeat</keyword>
<keyword id="KW-0694">RNA-binding</keyword>
<keyword id="KW-0747">Spliceosome</keyword>
<keyword id="KW-0862">Zinc</keyword>
<keyword id="KW-0863">Zinc-finger</keyword>
<dbReference type="EMBL" id="AK008332">
    <property type="protein sequence ID" value="BAB25609.1"/>
    <property type="molecule type" value="mRNA"/>
</dbReference>
<dbReference type="EMBL" id="AK012849">
    <property type="protein sequence ID" value="BAB28511.1"/>
    <property type="molecule type" value="mRNA"/>
</dbReference>
<dbReference type="EMBL" id="AK088979">
    <property type="protein sequence ID" value="BAC40683.1"/>
    <property type="molecule type" value="mRNA"/>
</dbReference>
<dbReference type="EMBL" id="AK150872">
    <property type="protein sequence ID" value="BAE29923.1"/>
    <property type="molecule type" value="mRNA"/>
</dbReference>
<dbReference type="EMBL" id="BC002184">
    <property type="protein sequence ID" value="AAH02184.1"/>
    <property type="molecule type" value="mRNA"/>
</dbReference>
<dbReference type="CCDS" id="CCDS28611.1"/>
<dbReference type="RefSeq" id="NP_001157241.1">
    <property type="nucleotide sequence ID" value="NM_001163769.1"/>
</dbReference>
<dbReference type="RefSeq" id="NP_077149.2">
    <property type="nucleotide sequence ID" value="NM_024187.4"/>
</dbReference>
<dbReference type="SMR" id="Q9D883"/>
<dbReference type="BioGRID" id="223844">
    <property type="interactions" value="9"/>
</dbReference>
<dbReference type="FunCoup" id="Q9D883">
    <property type="interactions" value="2081"/>
</dbReference>
<dbReference type="IntAct" id="Q9D883">
    <property type="interactions" value="3"/>
</dbReference>
<dbReference type="MINT" id="Q9D883"/>
<dbReference type="STRING" id="10090.ENSMUSP00000014684"/>
<dbReference type="GlyGen" id="Q9D883">
    <property type="glycosylation" value="2 sites, 1 N-linked glycan (1 site), 1 O-linked glycan (1 site)"/>
</dbReference>
<dbReference type="iPTMnet" id="Q9D883"/>
<dbReference type="PhosphoSitePlus" id="Q9D883"/>
<dbReference type="SwissPalm" id="Q9D883"/>
<dbReference type="jPOST" id="Q9D883"/>
<dbReference type="PaxDb" id="10090-ENSMUSP00000014684"/>
<dbReference type="ProteomicsDB" id="298083"/>
<dbReference type="Pumba" id="Q9D883"/>
<dbReference type="DNASU" id="108121"/>
<dbReference type="Ensembl" id="ENSMUST00000014684.6">
    <property type="protein sequence ID" value="ENSMUSP00000014684.5"/>
    <property type="gene ID" value="ENSMUSG00000061613.14"/>
</dbReference>
<dbReference type="GeneID" id="108121"/>
<dbReference type="KEGG" id="mmu:108121"/>
<dbReference type="UCSC" id="uc008bvo.2">
    <property type="organism name" value="mouse"/>
</dbReference>
<dbReference type="AGR" id="MGI:98884"/>
<dbReference type="CTD" id="7307"/>
<dbReference type="MGI" id="MGI:98884">
    <property type="gene designation" value="U2af1"/>
</dbReference>
<dbReference type="VEuPathDB" id="HostDB:ENSMUSG00000061613"/>
<dbReference type="eggNOG" id="KOG2202">
    <property type="taxonomic scope" value="Eukaryota"/>
</dbReference>
<dbReference type="GeneTree" id="ENSGT00950000183152"/>
<dbReference type="InParanoid" id="Q9D883"/>
<dbReference type="OMA" id="MIDTRQA"/>
<dbReference type="OrthoDB" id="423462at2759"/>
<dbReference type="PhylomeDB" id="Q9D883"/>
<dbReference type="Reactome" id="R-MMU-159236">
    <property type="pathway name" value="Transport of Mature mRNA derived from an Intron-Containing Transcript"/>
</dbReference>
<dbReference type="Reactome" id="R-MMU-72163">
    <property type="pathway name" value="mRNA Splicing - Major Pathway"/>
</dbReference>
<dbReference type="Reactome" id="R-MMU-72187">
    <property type="pathway name" value="mRNA 3'-end processing"/>
</dbReference>
<dbReference type="Reactome" id="R-MMU-73856">
    <property type="pathway name" value="RNA Polymerase II Transcription Termination"/>
</dbReference>
<dbReference type="BioGRID-ORCS" id="108121">
    <property type="hits" value="26 hits in 77 CRISPR screens"/>
</dbReference>
<dbReference type="ChiTaRS" id="U2af1">
    <property type="organism name" value="mouse"/>
</dbReference>
<dbReference type="PRO" id="PR:Q9D883"/>
<dbReference type="Proteomes" id="UP000000589">
    <property type="component" value="Chromosome 17"/>
</dbReference>
<dbReference type="RNAct" id="Q9D883">
    <property type="molecule type" value="protein"/>
</dbReference>
<dbReference type="Bgee" id="ENSMUSG00000061613">
    <property type="expression patterns" value="Expressed in epiblast (generic) and 115 other cell types or tissues"/>
</dbReference>
<dbReference type="ExpressionAtlas" id="Q9D883">
    <property type="expression patterns" value="baseline and differential"/>
</dbReference>
<dbReference type="GO" id="GO:0071013">
    <property type="term" value="C:catalytic step 2 spliceosome"/>
    <property type="evidence" value="ECO:0007669"/>
    <property type="project" value="Ensembl"/>
</dbReference>
<dbReference type="GO" id="GO:0016607">
    <property type="term" value="C:nuclear speck"/>
    <property type="evidence" value="ECO:0000314"/>
    <property type="project" value="UniProtKB"/>
</dbReference>
<dbReference type="GO" id="GO:0089701">
    <property type="term" value="C:U2AF complex"/>
    <property type="evidence" value="ECO:0007669"/>
    <property type="project" value="Ensembl"/>
</dbReference>
<dbReference type="GO" id="GO:0003723">
    <property type="term" value="F:RNA binding"/>
    <property type="evidence" value="ECO:0007669"/>
    <property type="project" value="UniProtKB-KW"/>
</dbReference>
<dbReference type="GO" id="GO:0050733">
    <property type="term" value="F:RS domain binding"/>
    <property type="evidence" value="ECO:0000353"/>
    <property type="project" value="MGI"/>
</dbReference>
<dbReference type="GO" id="GO:0008270">
    <property type="term" value="F:zinc ion binding"/>
    <property type="evidence" value="ECO:0007669"/>
    <property type="project" value="UniProtKB-KW"/>
</dbReference>
<dbReference type="GO" id="GO:0000398">
    <property type="term" value="P:mRNA splicing, via spliceosome"/>
    <property type="evidence" value="ECO:0007669"/>
    <property type="project" value="InterPro"/>
</dbReference>
<dbReference type="CDD" id="cd12538">
    <property type="entry name" value="RRM_U2AF35"/>
    <property type="match status" value="1"/>
</dbReference>
<dbReference type="FunFam" id="3.30.70.330:FF:000055">
    <property type="entry name" value="Splicing factor U2AF 35 kDa subunit"/>
    <property type="match status" value="1"/>
</dbReference>
<dbReference type="Gene3D" id="3.30.70.330">
    <property type="match status" value="1"/>
</dbReference>
<dbReference type="InterPro" id="IPR012677">
    <property type="entry name" value="Nucleotide-bd_a/b_plait_sf"/>
</dbReference>
<dbReference type="InterPro" id="IPR035979">
    <property type="entry name" value="RBD_domain_sf"/>
</dbReference>
<dbReference type="InterPro" id="IPR000504">
    <property type="entry name" value="RRM_dom"/>
</dbReference>
<dbReference type="InterPro" id="IPR003954">
    <property type="entry name" value="RRM_dom_euk"/>
</dbReference>
<dbReference type="InterPro" id="IPR009145">
    <property type="entry name" value="U2AF_small"/>
</dbReference>
<dbReference type="InterPro" id="IPR000571">
    <property type="entry name" value="Znf_CCCH"/>
</dbReference>
<dbReference type="PANTHER" id="PTHR12620">
    <property type="entry name" value="U2 SNRNP AUXILIARY FACTOR, SMALL SUBUNIT"/>
    <property type="match status" value="1"/>
</dbReference>
<dbReference type="Pfam" id="PF00076">
    <property type="entry name" value="RRM_1"/>
    <property type="match status" value="1"/>
</dbReference>
<dbReference type="Pfam" id="PF00642">
    <property type="entry name" value="zf-CCCH"/>
    <property type="match status" value="2"/>
</dbReference>
<dbReference type="PRINTS" id="PR01848">
    <property type="entry name" value="U2AUXFACTOR"/>
</dbReference>
<dbReference type="SMART" id="SM00360">
    <property type="entry name" value="RRM"/>
    <property type="match status" value="1"/>
</dbReference>
<dbReference type="SMART" id="SM00361">
    <property type="entry name" value="RRM_1"/>
    <property type="match status" value="1"/>
</dbReference>
<dbReference type="SMART" id="SM00356">
    <property type="entry name" value="ZnF_C3H1"/>
    <property type="match status" value="2"/>
</dbReference>
<dbReference type="SUPFAM" id="SSF54928">
    <property type="entry name" value="RNA-binding domain, RBD"/>
    <property type="match status" value="1"/>
</dbReference>
<dbReference type="PROSITE" id="PS50102">
    <property type="entry name" value="RRM"/>
    <property type="match status" value="1"/>
</dbReference>
<dbReference type="PROSITE" id="PS50103">
    <property type="entry name" value="ZF_C3H1"/>
    <property type="match status" value="2"/>
</dbReference>
<gene>
    <name type="primary">U2af1</name>
</gene>
<proteinExistence type="evidence at protein level"/>
<organism>
    <name type="scientific">Mus musculus</name>
    <name type="common">Mouse</name>
    <dbReference type="NCBI Taxonomy" id="10090"/>
    <lineage>
        <taxon>Eukaryota</taxon>
        <taxon>Metazoa</taxon>
        <taxon>Chordata</taxon>
        <taxon>Craniata</taxon>
        <taxon>Vertebrata</taxon>
        <taxon>Euteleostomi</taxon>
        <taxon>Mammalia</taxon>
        <taxon>Eutheria</taxon>
        <taxon>Euarchontoglires</taxon>
        <taxon>Glires</taxon>
        <taxon>Rodentia</taxon>
        <taxon>Myomorpha</taxon>
        <taxon>Muroidea</taxon>
        <taxon>Muridae</taxon>
        <taxon>Murinae</taxon>
        <taxon>Mus</taxon>
        <taxon>Mus</taxon>
    </lineage>
</organism>
<evidence type="ECO:0000250" key="1"/>
<evidence type="ECO:0000250" key="2">
    <source>
        <dbReference type="UniProtKB" id="Q01081"/>
    </source>
</evidence>
<evidence type="ECO:0000255" key="3">
    <source>
        <dbReference type="PROSITE-ProRule" id="PRU00176"/>
    </source>
</evidence>
<evidence type="ECO:0000255" key="4">
    <source>
        <dbReference type="PROSITE-ProRule" id="PRU00723"/>
    </source>
</evidence>
<evidence type="ECO:0000256" key="5">
    <source>
        <dbReference type="SAM" id="MobiDB-lite"/>
    </source>
</evidence>
<evidence type="ECO:0000269" key="6">
    <source>
    </source>
</evidence>
<evidence type="ECO:0000305" key="7"/>
<comment type="function">
    <text evidence="1">Plays a critical role in both constitutive and enhancer-dependent splicing by mediating protein-protein interactions and protein-RNA interactions required for accurate 3'-splice site selection. Recruits U2 snRNP to the branch point. Directly mediates interactions between U2AF2 and proteins bound to the enhancers and thus may function as a bridge between U2AF2 and the enhancer complex to recruit it to the adjacent intron (By similarity).</text>
</comment>
<comment type="subunit">
    <text evidence="2 6">Identified in the spliceosome C complex (By similarity). Heterodimer with U2AF2 (By similarity). Interacts (via RS domain) with PHF5A (via N-terminus) (PubMed:18758164). Interacts with ZRANB2 (By similarity). Interacts with SDE2 (By similarity). Interacts with SF3B1 (By similarity).</text>
</comment>
<comment type="subcellular location">
    <subcellularLocation>
        <location evidence="6">Nucleus</location>
    </subcellularLocation>
    <subcellularLocation>
        <location evidence="6">Nucleus speckle</location>
    </subcellularLocation>
</comment>
<comment type="tissue specificity">
    <text evidence="6">Expressed in primary spermatocytes and elongating spermatids (at protein level).</text>
</comment>
<comment type="domain">
    <text evidence="1">The C-terminal SR-rich domain is required for interactions with SR proteins and the splicing regulators TRA and TRA2, and the N-terminal domain is required for formation of the U2AF1/U2AF2 heterodimer.</text>
</comment>
<comment type="similarity">
    <text evidence="7">Belongs to the splicing factor SR family.</text>
</comment>
<protein>
    <recommendedName>
        <fullName>Splicing factor U2AF 35 kDa subunit</fullName>
    </recommendedName>
    <alternativeName>
        <fullName>U2 auxiliary factor 35 kDa subunit</fullName>
    </alternativeName>
    <alternativeName>
        <fullName>U2 snRNP auxiliary factor small subunit</fullName>
    </alternativeName>
</protein>
<feature type="initiator methionine" description="Removed" evidence="2">
    <location>
        <position position="1"/>
    </location>
</feature>
<feature type="chain" id="PRO_0000081995" description="Splicing factor U2AF 35 kDa subunit">
    <location>
        <begin position="2"/>
        <end position="239"/>
    </location>
</feature>
<feature type="domain" description="RRM" evidence="3">
    <location>
        <begin position="65"/>
        <end position="147"/>
    </location>
</feature>
<feature type="zinc finger region" description="C3H1-type 1" evidence="4">
    <location>
        <begin position="12"/>
        <end position="40"/>
    </location>
</feature>
<feature type="zinc finger region" description="C3H1-type 2" evidence="4">
    <location>
        <begin position="149"/>
        <end position="176"/>
    </location>
</feature>
<feature type="region of interest" description="Disordered" evidence="5">
    <location>
        <begin position="183"/>
        <end position="239"/>
    </location>
</feature>
<feature type="compositionally biased region" description="Basic residues" evidence="5">
    <location>
        <begin position="188"/>
        <end position="208"/>
    </location>
</feature>
<feature type="compositionally biased region" description="Gly residues" evidence="5">
    <location>
        <begin position="212"/>
        <end position="221"/>
    </location>
</feature>
<feature type="compositionally biased region" description="Basic and acidic residues" evidence="5">
    <location>
        <begin position="222"/>
        <end position="239"/>
    </location>
</feature>
<feature type="modified residue" description="N-acetylalanine" evidence="2">
    <location>
        <position position="2"/>
    </location>
</feature>
<feature type="modified residue" description="N6-methyllysine" evidence="2">
    <location>
        <position position="39"/>
    </location>
</feature>
<feature type="modified residue" description="Phosphoserine" evidence="2">
    <location>
        <position position="61"/>
    </location>
</feature>
<feature type="modified residue" description="Phosphoserine" evidence="2">
    <location>
        <position position="145"/>
    </location>
</feature>
<feature type="modified residue" description="Omega-N-methylarginine" evidence="2">
    <location>
        <position position="165"/>
    </location>
</feature>
<feature type="sequence conflict" description="In Ref. 1; BAB25609." evidence="7" ref="1">
    <original>G</original>
    <variation>R</variation>
    <location>
        <position position="187"/>
    </location>
</feature>
<reference key="1">
    <citation type="journal article" date="2005" name="Science">
        <title>The transcriptional landscape of the mammalian genome.</title>
        <authorList>
            <person name="Carninci P."/>
            <person name="Kasukawa T."/>
            <person name="Katayama S."/>
            <person name="Gough J."/>
            <person name="Frith M.C."/>
            <person name="Maeda N."/>
            <person name="Oyama R."/>
            <person name="Ravasi T."/>
            <person name="Lenhard B."/>
            <person name="Wells C."/>
            <person name="Kodzius R."/>
            <person name="Shimokawa K."/>
            <person name="Bajic V.B."/>
            <person name="Brenner S.E."/>
            <person name="Batalov S."/>
            <person name="Forrest A.R."/>
            <person name="Zavolan M."/>
            <person name="Davis M.J."/>
            <person name="Wilming L.G."/>
            <person name="Aidinis V."/>
            <person name="Allen J.E."/>
            <person name="Ambesi-Impiombato A."/>
            <person name="Apweiler R."/>
            <person name="Aturaliya R.N."/>
            <person name="Bailey T.L."/>
            <person name="Bansal M."/>
            <person name="Baxter L."/>
            <person name="Beisel K.W."/>
            <person name="Bersano T."/>
            <person name="Bono H."/>
            <person name="Chalk A.M."/>
            <person name="Chiu K.P."/>
            <person name="Choudhary V."/>
            <person name="Christoffels A."/>
            <person name="Clutterbuck D.R."/>
            <person name="Crowe M.L."/>
            <person name="Dalla E."/>
            <person name="Dalrymple B.P."/>
            <person name="de Bono B."/>
            <person name="Della Gatta G."/>
            <person name="di Bernardo D."/>
            <person name="Down T."/>
            <person name="Engstrom P."/>
            <person name="Fagiolini M."/>
            <person name="Faulkner G."/>
            <person name="Fletcher C.F."/>
            <person name="Fukushima T."/>
            <person name="Furuno M."/>
            <person name="Futaki S."/>
            <person name="Gariboldi M."/>
            <person name="Georgii-Hemming P."/>
            <person name="Gingeras T.R."/>
            <person name="Gojobori T."/>
            <person name="Green R.E."/>
            <person name="Gustincich S."/>
            <person name="Harbers M."/>
            <person name="Hayashi Y."/>
            <person name="Hensch T.K."/>
            <person name="Hirokawa N."/>
            <person name="Hill D."/>
            <person name="Huminiecki L."/>
            <person name="Iacono M."/>
            <person name="Ikeo K."/>
            <person name="Iwama A."/>
            <person name="Ishikawa T."/>
            <person name="Jakt M."/>
            <person name="Kanapin A."/>
            <person name="Katoh M."/>
            <person name="Kawasawa Y."/>
            <person name="Kelso J."/>
            <person name="Kitamura H."/>
            <person name="Kitano H."/>
            <person name="Kollias G."/>
            <person name="Krishnan S.P."/>
            <person name="Kruger A."/>
            <person name="Kummerfeld S.K."/>
            <person name="Kurochkin I.V."/>
            <person name="Lareau L.F."/>
            <person name="Lazarevic D."/>
            <person name="Lipovich L."/>
            <person name="Liu J."/>
            <person name="Liuni S."/>
            <person name="McWilliam S."/>
            <person name="Madan Babu M."/>
            <person name="Madera M."/>
            <person name="Marchionni L."/>
            <person name="Matsuda H."/>
            <person name="Matsuzawa S."/>
            <person name="Miki H."/>
            <person name="Mignone F."/>
            <person name="Miyake S."/>
            <person name="Morris K."/>
            <person name="Mottagui-Tabar S."/>
            <person name="Mulder N."/>
            <person name="Nakano N."/>
            <person name="Nakauchi H."/>
            <person name="Ng P."/>
            <person name="Nilsson R."/>
            <person name="Nishiguchi S."/>
            <person name="Nishikawa S."/>
            <person name="Nori F."/>
            <person name="Ohara O."/>
            <person name="Okazaki Y."/>
            <person name="Orlando V."/>
            <person name="Pang K.C."/>
            <person name="Pavan W.J."/>
            <person name="Pavesi G."/>
            <person name="Pesole G."/>
            <person name="Petrovsky N."/>
            <person name="Piazza S."/>
            <person name="Reed J."/>
            <person name="Reid J.F."/>
            <person name="Ring B.Z."/>
            <person name="Ringwald M."/>
            <person name="Rost B."/>
            <person name="Ruan Y."/>
            <person name="Salzberg S.L."/>
            <person name="Sandelin A."/>
            <person name="Schneider C."/>
            <person name="Schoenbach C."/>
            <person name="Sekiguchi K."/>
            <person name="Semple C.A."/>
            <person name="Seno S."/>
            <person name="Sessa L."/>
            <person name="Sheng Y."/>
            <person name="Shibata Y."/>
            <person name="Shimada H."/>
            <person name="Shimada K."/>
            <person name="Silva D."/>
            <person name="Sinclair B."/>
            <person name="Sperling S."/>
            <person name="Stupka E."/>
            <person name="Sugiura K."/>
            <person name="Sultana R."/>
            <person name="Takenaka Y."/>
            <person name="Taki K."/>
            <person name="Tammoja K."/>
            <person name="Tan S.L."/>
            <person name="Tang S."/>
            <person name="Taylor M.S."/>
            <person name="Tegner J."/>
            <person name="Teichmann S.A."/>
            <person name="Ueda H.R."/>
            <person name="van Nimwegen E."/>
            <person name="Verardo R."/>
            <person name="Wei C.L."/>
            <person name="Yagi K."/>
            <person name="Yamanishi H."/>
            <person name="Zabarovsky E."/>
            <person name="Zhu S."/>
            <person name="Zimmer A."/>
            <person name="Hide W."/>
            <person name="Bult C."/>
            <person name="Grimmond S.M."/>
            <person name="Teasdale R.D."/>
            <person name="Liu E.T."/>
            <person name="Brusic V."/>
            <person name="Quackenbush J."/>
            <person name="Wahlestedt C."/>
            <person name="Mattick J.S."/>
            <person name="Hume D.A."/>
            <person name="Kai C."/>
            <person name="Sasaki D."/>
            <person name="Tomaru Y."/>
            <person name="Fukuda S."/>
            <person name="Kanamori-Katayama M."/>
            <person name="Suzuki M."/>
            <person name="Aoki J."/>
            <person name="Arakawa T."/>
            <person name="Iida J."/>
            <person name="Imamura K."/>
            <person name="Itoh M."/>
            <person name="Kato T."/>
            <person name="Kawaji H."/>
            <person name="Kawagashira N."/>
            <person name="Kawashima T."/>
            <person name="Kojima M."/>
            <person name="Kondo S."/>
            <person name="Konno H."/>
            <person name="Nakano K."/>
            <person name="Ninomiya N."/>
            <person name="Nishio T."/>
            <person name="Okada M."/>
            <person name="Plessy C."/>
            <person name="Shibata K."/>
            <person name="Shiraki T."/>
            <person name="Suzuki S."/>
            <person name="Tagami M."/>
            <person name="Waki K."/>
            <person name="Watahiki A."/>
            <person name="Okamura-Oho Y."/>
            <person name="Suzuki H."/>
            <person name="Kawai J."/>
            <person name="Hayashizaki Y."/>
        </authorList>
    </citation>
    <scope>NUCLEOTIDE SEQUENCE [LARGE SCALE MRNA]</scope>
    <source>
        <strain>C57BL/6J</strain>
        <strain>NOD</strain>
        <tissue>Bone marrow</tissue>
        <tissue>Small intestine</tissue>
        <tissue>Thymus</tissue>
    </source>
</reference>
<reference key="2">
    <citation type="journal article" date="2004" name="Genome Res.">
        <title>The status, quality, and expansion of the NIH full-length cDNA project: the Mammalian Gene Collection (MGC).</title>
        <authorList>
            <consortium name="The MGC Project Team"/>
        </authorList>
    </citation>
    <scope>NUCLEOTIDE SEQUENCE [LARGE SCALE MRNA]</scope>
    <source>
        <tissue>Mammary tumor</tissue>
    </source>
</reference>
<reference key="3">
    <citation type="journal article" date="2008" name="Cytogenet. Genome Res.">
        <title>PHF5A represents a bridge protein between splicing proteins and ATP-dependent helicases and is differentially expressed during mouse spermatogenesis.</title>
        <authorList>
            <person name="Rzymski T."/>
            <person name="Grzmil P."/>
            <person name="Meinhardt A."/>
            <person name="Wolf S."/>
            <person name="Burfeind P."/>
        </authorList>
    </citation>
    <scope>INTERACTION WITH PHF5A</scope>
    <scope>SUBCELLULAR LOCATION</scope>
    <scope>TISSUE SPECIFICITY</scope>
</reference>
<reference key="4">
    <citation type="journal article" date="2010" name="Cell">
        <title>A tissue-specific atlas of mouse protein phosphorylation and expression.</title>
        <authorList>
            <person name="Huttlin E.L."/>
            <person name="Jedrychowski M.P."/>
            <person name="Elias J.E."/>
            <person name="Goswami T."/>
            <person name="Rad R."/>
            <person name="Beausoleil S.A."/>
            <person name="Villen J."/>
            <person name="Haas W."/>
            <person name="Sowa M.E."/>
            <person name="Gygi S.P."/>
        </authorList>
    </citation>
    <scope>IDENTIFICATION BY MASS SPECTROMETRY [LARGE SCALE ANALYSIS]</scope>
    <source>
        <tissue>Pancreas</tissue>
        <tissue>Spleen</tissue>
    </source>
</reference>